<evidence type="ECO:0000255" key="1">
    <source>
        <dbReference type="HAMAP-Rule" id="MF_00272"/>
    </source>
</evidence>
<evidence type="ECO:0000255" key="2">
    <source>
        <dbReference type="PROSITE-ProRule" id="PRU01066"/>
    </source>
</evidence>
<gene>
    <name evidence="1" type="primary">gcvH</name>
    <name type="ordered locus">PTO0624</name>
</gene>
<sequence>MSRVPDNLYYTKSHEWFLIENGVATVGITDYAQHQLTDIVYVDFPKNGEHKNKGETLLTIESVKSAEDVYSPVTGEIIEINRDLESKPELINEDPYKNWLVKIRLSNDNFDGMSGEEYKKYIGE</sequence>
<protein>
    <recommendedName>
        <fullName evidence="1">Probable glycine cleavage system H protein</fullName>
    </recommendedName>
</protein>
<accession>Q6L1E3</accession>
<feature type="chain" id="PRO_0000166274" description="Probable glycine cleavage system H protein">
    <location>
        <begin position="1"/>
        <end position="124"/>
    </location>
</feature>
<feature type="domain" description="Lipoyl-binding" evidence="2">
    <location>
        <begin position="23"/>
        <end position="104"/>
    </location>
</feature>
<feature type="modified residue" description="N6-lipoyllysine" evidence="1">
    <location>
        <position position="64"/>
    </location>
</feature>
<organism>
    <name type="scientific">Picrophilus torridus (strain ATCC 700027 / DSM 9790 / JCM 10055 / NBRC 100828 / KAW 2/3)</name>
    <dbReference type="NCBI Taxonomy" id="1122961"/>
    <lineage>
        <taxon>Archaea</taxon>
        <taxon>Methanobacteriati</taxon>
        <taxon>Thermoplasmatota</taxon>
        <taxon>Thermoplasmata</taxon>
        <taxon>Thermoplasmatales</taxon>
        <taxon>Picrophilaceae</taxon>
        <taxon>Picrophilus</taxon>
    </lineage>
</organism>
<proteinExistence type="inferred from homology"/>
<keyword id="KW-0450">Lipoyl</keyword>
<comment type="function">
    <text evidence="1">The glycine cleavage system catalyzes the degradation of glycine. The H protein shuttles the methylamine group of glycine from the P protein to the T protein.</text>
</comment>
<comment type="cofactor">
    <cofactor evidence="1">
        <name>(R)-lipoate</name>
        <dbReference type="ChEBI" id="CHEBI:83088"/>
    </cofactor>
    <text evidence="1">Binds 1 lipoyl cofactor covalently.</text>
</comment>
<comment type="subunit">
    <text evidence="1">The glycine cleavage system is composed of four proteins: P, T, L and H.</text>
</comment>
<comment type="similarity">
    <text evidence="1">Belongs to the GcvH family.</text>
</comment>
<name>GCSH_PICTO</name>
<dbReference type="EMBL" id="AE017261">
    <property type="protein sequence ID" value="AAT43209.1"/>
    <property type="molecule type" value="Genomic_DNA"/>
</dbReference>
<dbReference type="RefSeq" id="WP_011177425.1">
    <property type="nucleotide sequence ID" value="NC_005877.1"/>
</dbReference>
<dbReference type="SMR" id="Q6L1E3"/>
<dbReference type="FunCoup" id="Q6L1E3">
    <property type="interactions" value="141"/>
</dbReference>
<dbReference type="STRING" id="263820.PTO0624"/>
<dbReference type="PaxDb" id="263820-PTO0624"/>
<dbReference type="GeneID" id="2844742"/>
<dbReference type="KEGG" id="pto:PTO0624"/>
<dbReference type="PATRIC" id="fig|263820.9.peg.656"/>
<dbReference type="eggNOG" id="arCOG01303">
    <property type="taxonomic scope" value="Archaea"/>
</dbReference>
<dbReference type="HOGENOM" id="CLU_097408_2_2_2"/>
<dbReference type="InParanoid" id="Q6L1E3"/>
<dbReference type="OrthoDB" id="9810at2157"/>
<dbReference type="Proteomes" id="UP000000438">
    <property type="component" value="Chromosome"/>
</dbReference>
<dbReference type="GO" id="GO:0005829">
    <property type="term" value="C:cytosol"/>
    <property type="evidence" value="ECO:0007669"/>
    <property type="project" value="TreeGrafter"/>
</dbReference>
<dbReference type="GO" id="GO:0005960">
    <property type="term" value="C:glycine cleavage complex"/>
    <property type="evidence" value="ECO:0007669"/>
    <property type="project" value="InterPro"/>
</dbReference>
<dbReference type="GO" id="GO:0019464">
    <property type="term" value="P:glycine decarboxylation via glycine cleavage system"/>
    <property type="evidence" value="ECO:0007669"/>
    <property type="project" value="UniProtKB-UniRule"/>
</dbReference>
<dbReference type="CDD" id="cd06848">
    <property type="entry name" value="GCS_H"/>
    <property type="match status" value="1"/>
</dbReference>
<dbReference type="Gene3D" id="2.40.50.100">
    <property type="match status" value="1"/>
</dbReference>
<dbReference type="HAMAP" id="MF_00272">
    <property type="entry name" value="GcvH"/>
    <property type="match status" value="1"/>
</dbReference>
<dbReference type="InterPro" id="IPR000089">
    <property type="entry name" value="Biotin_lipoyl"/>
</dbReference>
<dbReference type="InterPro" id="IPR002930">
    <property type="entry name" value="GCV_H"/>
</dbReference>
<dbReference type="InterPro" id="IPR033753">
    <property type="entry name" value="GCV_H/Fam206"/>
</dbReference>
<dbReference type="InterPro" id="IPR017453">
    <property type="entry name" value="GCV_H_sub"/>
</dbReference>
<dbReference type="InterPro" id="IPR011053">
    <property type="entry name" value="Single_hybrid_motif"/>
</dbReference>
<dbReference type="NCBIfam" id="TIGR00527">
    <property type="entry name" value="gcvH"/>
    <property type="match status" value="1"/>
</dbReference>
<dbReference type="NCBIfam" id="NF002270">
    <property type="entry name" value="PRK01202.1"/>
    <property type="match status" value="1"/>
</dbReference>
<dbReference type="PANTHER" id="PTHR11715">
    <property type="entry name" value="GLYCINE CLEAVAGE SYSTEM H PROTEIN"/>
    <property type="match status" value="1"/>
</dbReference>
<dbReference type="PANTHER" id="PTHR11715:SF3">
    <property type="entry name" value="GLYCINE CLEAVAGE SYSTEM H PROTEIN-RELATED"/>
    <property type="match status" value="1"/>
</dbReference>
<dbReference type="Pfam" id="PF01597">
    <property type="entry name" value="GCV_H"/>
    <property type="match status" value="1"/>
</dbReference>
<dbReference type="SUPFAM" id="SSF51230">
    <property type="entry name" value="Single hybrid motif"/>
    <property type="match status" value="1"/>
</dbReference>
<dbReference type="PROSITE" id="PS50968">
    <property type="entry name" value="BIOTINYL_LIPOYL"/>
    <property type="match status" value="1"/>
</dbReference>
<reference key="1">
    <citation type="journal article" date="2004" name="Proc. Natl. Acad. Sci. U.S.A.">
        <title>Genome sequence of Picrophilus torridus and its implications for life around pH 0.</title>
        <authorList>
            <person name="Fuetterer O."/>
            <person name="Angelov A."/>
            <person name="Liesegang H."/>
            <person name="Gottschalk G."/>
            <person name="Schleper C."/>
            <person name="Schepers B."/>
            <person name="Dock C."/>
            <person name="Antranikian G."/>
            <person name="Liebl W."/>
        </authorList>
    </citation>
    <scope>NUCLEOTIDE SEQUENCE [LARGE SCALE GENOMIC DNA]</scope>
    <source>
        <strain>ATCC 700027 / DSM 9790 / JCM 10055 / NBRC 100828 / KAW 2/3</strain>
    </source>
</reference>